<keyword id="KW-0025">Alternative splicing</keyword>
<keyword id="KW-0053">Apoptosis</keyword>
<keyword id="KW-0067">ATP-binding</keyword>
<keyword id="KW-0963">Cytoplasm</keyword>
<keyword id="KW-0418">Kinase</keyword>
<keyword id="KW-0460">Magnesium</keyword>
<keyword id="KW-0479">Metal-binding</keyword>
<keyword id="KW-0547">Nucleotide-binding</keyword>
<keyword id="KW-0539">Nucleus</keyword>
<keyword id="KW-0597">Phosphoprotein</keyword>
<keyword id="KW-1185">Reference proteome</keyword>
<keyword id="KW-0723">Serine/threonine-protein kinase</keyword>
<keyword id="KW-0808">Transferase</keyword>
<keyword id="KW-0810">Translation regulation</keyword>
<keyword id="KW-0862">Zinc</keyword>
<comment type="function">
    <text evidence="6 8 9 10 11 12 13">Serine/threonine-protein kinase that phosphorylates SFPQ/PSF, HNRNPA1 and EIF4E. May play a role in the response to environmental stress and cytokines. Appears to regulate translation by phosphorylating EIF4E, thus increasing the affinity of this protein for the 7-methylguanosine-containing mRNA cap. Required for mediating PP2A-inhibition-induced EIF4E phosphorylation. Triggers EIF4E shuttling from cytoplasm to nucleus. Enhances the formation of EIF4F complex in pachytene spermatocytes, thus promoting mRNA translation during spermatogenesis. Displays a high basal kinase activity. Acts as a mediator of the suppressive effects of IFNgamma on hematopoiesis. Negative regulator for signals that control generation of arsenic trioxide As(2)O(3)-dependent apoptosis and anti-leukemic responses. Involved in anti-apoptotic signaling in response to serum withdrawal.</text>
</comment>
<comment type="catalytic activity">
    <reaction evidence="13">
        <text>L-seryl-[protein] + ATP = O-phospho-L-seryl-[protein] + ADP + H(+)</text>
        <dbReference type="Rhea" id="RHEA:17989"/>
        <dbReference type="Rhea" id="RHEA-COMP:9863"/>
        <dbReference type="Rhea" id="RHEA-COMP:11604"/>
        <dbReference type="ChEBI" id="CHEBI:15378"/>
        <dbReference type="ChEBI" id="CHEBI:29999"/>
        <dbReference type="ChEBI" id="CHEBI:30616"/>
        <dbReference type="ChEBI" id="CHEBI:83421"/>
        <dbReference type="ChEBI" id="CHEBI:456216"/>
        <dbReference type="EC" id="2.7.11.1"/>
    </reaction>
</comment>
<comment type="catalytic activity">
    <reaction evidence="13">
        <text>L-threonyl-[protein] + ATP = O-phospho-L-threonyl-[protein] + ADP + H(+)</text>
        <dbReference type="Rhea" id="RHEA:46608"/>
        <dbReference type="Rhea" id="RHEA-COMP:11060"/>
        <dbReference type="Rhea" id="RHEA-COMP:11605"/>
        <dbReference type="ChEBI" id="CHEBI:15378"/>
        <dbReference type="ChEBI" id="CHEBI:30013"/>
        <dbReference type="ChEBI" id="CHEBI:30616"/>
        <dbReference type="ChEBI" id="CHEBI:61977"/>
        <dbReference type="ChEBI" id="CHEBI:456216"/>
        <dbReference type="EC" id="2.7.11.1"/>
    </reaction>
</comment>
<comment type="cofactor">
    <cofactor evidence="13">
        <name>Mg(2+)</name>
        <dbReference type="ChEBI" id="CHEBI:18420"/>
    </cofactor>
</comment>
<comment type="cofactor">
    <cofactor evidence="1">
        <name>Zn(2+)</name>
        <dbReference type="ChEBI" id="CHEBI:29105"/>
    </cofactor>
    <text evidence="1">Binds 1 zinc ion per monomer.</text>
</comment>
<comment type="activity regulation">
    <text evidence="9 12">Inhibited by CGP57380 and staurosporine.</text>
</comment>
<comment type="subunit">
    <text evidence="1 6 7 11 13">Interacts with ESR2 and EIF4E in the nucleus (By similarity). Monomer. Interacts with the C-terminal regions of EIF4G1 and EIF4G2; this interaction is promoted when MAPK pathways are repressed but repressed upon ERK proteins activation. Also binds to dephosphorylated MAPK3/ERK1 and MAPK1/ERK2. Interaction with phosphorylated MAPK3/ERK1 and MAPK1/ERK2 protects it from dephosphorylation and inactivation.</text>
</comment>
<comment type="interaction">
    <interactant intactId="EBI-646209">
        <id>Q8CDB0</id>
    </interactant>
    <interactant intactId="EBI-397697">
        <id>P63085</id>
        <label>Mapk1</label>
    </interactant>
    <organismsDiffer>false</organismsDiffer>
    <experiments>23</experiments>
</comment>
<comment type="interaction">
    <interactant intactId="EBI-646209">
        <id>Q8CDB0</id>
    </interactant>
    <interactant intactId="EBI-520016">
        <id>P39429</id>
        <label>Traf2</label>
    </interactant>
    <organismsDiffer>false</organismsDiffer>
    <experiments>3</experiments>
</comment>
<comment type="subcellular location">
    <subcellularLocation>
        <location evidence="1">Cytoplasm</location>
    </subcellularLocation>
    <subcellularLocation>
        <location evidence="1">Nucleus</location>
        <location evidence="1">PML body</location>
    </subcellularLocation>
</comment>
<comment type="alternative products">
    <event type="alternative splicing"/>
    <isoform>
        <id>Q8CDB0-1</id>
        <name evidence="13">1</name>
        <sequence type="displayed"/>
    </isoform>
    <isoform>
        <id>Q8CDB0-2</id>
        <name>2</name>
        <sequence type="described" ref="VSP_007355"/>
    </isoform>
</comment>
<comment type="tissue specificity">
    <text evidence="13">Ubiquitously expressed in all tissues examined, with high levels in skeletal muscle and low levels in brain.</text>
</comment>
<comment type="PTM">
    <text evidence="1 6">Dual phosphorylation of Thr-244 and Thr-249 activates the kinase. Phosphorylation of Thr-379 activates the kinase. Phosphorylated upon arsenic trioxide As(2)O(3) treatment. Phosphorylated by MAPK1/ERK2, MAPK11 and MAPK14 (By similarity). Dephosphorylated by PP2A.</text>
</comment>
<comment type="similarity">
    <text evidence="15">Belongs to the protein kinase superfamily. CAMK Ser/Thr protein kinase family.</text>
</comment>
<comment type="sequence caution" evidence="15">
    <conflict type="erroneous initiation">
        <sequence resource="EMBL-CDS" id="AAH10256"/>
    </conflict>
</comment>
<comment type="sequence caution" evidence="15">
    <conflict type="frameshift">
        <sequence resource="EMBL-CDS" id="BAB25570"/>
    </conflict>
</comment>
<comment type="sequence caution" evidence="15">
    <conflict type="frameshift">
        <sequence resource="EMBL-CDS" id="CAA71966"/>
    </conflict>
</comment>
<protein>
    <recommendedName>
        <fullName>MAP kinase-interacting serine/threonine-protein kinase 2</fullName>
        <ecNumber>2.7.11.1</ecNumber>
    </recommendedName>
    <alternativeName>
        <fullName>MAP kinase signal-integrating kinase 2</fullName>
        <shortName>MAPK signal-integrating kinase 2</shortName>
        <shortName>Mnk2</shortName>
    </alternativeName>
</protein>
<organism evidence="16">
    <name type="scientific">Mus musculus</name>
    <name type="common">Mouse</name>
    <dbReference type="NCBI Taxonomy" id="10090"/>
    <lineage>
        <taxon>Eukaryota</taxon>
        <taxon>Metazoa</taxon>
        <taxon>Chordata</taxon>
        <taxon>Craniata</taxon>
        <taxon>Vertebrata</taxon>
        <taxon>Euteleostomi</taxon>
        <taxon>Mammalia</taxon>
        <taxon>Eutheria</taxon>
        <taxon>Euarchontoglires</taxon>
        <taxon>Glires</taxon>
        <taxon>Rodentia</taxon>
        <taxon>Myomorpha</taxon>
        <taxon>Muroidea</taxon>
        <taxon>Muridae</taxon>
        <taxon>Murinae</taxon>
        <taxon>Mus</taxon>
        <taxon>Mus</taxon>
    </lineage>
</organism>
<proteinExistence type="evidence at protein level"/>
<reference key="1">
    <citation type="journal article" date="2004" name="Mol. Cell. Biol.">
        <title>Mnk2 and Mnk1 are essential for constitutive and inducible phosphorylation of eukaryotic initiation factor 4E but not for cell growth or development.</title>
        <authorList>
            <person name="Ueda T."/>
            <person name="Watanabe-Fukunaga R."/>
            <person name="Fukuyama H."/>
            <person name="Nagata S."/>
            <person name="Fukunaga R."/>
        </authorList>
    </citation>
    <scope>NUCLEOTIDE SEQUENCE [MRNA] (ISOFORM 1)</scope>
</reference>
<reference key="2">
    <citation type="journal article" date="2005" name="Science">
        <title>The transcriptional landscape of the mammalian genome.</title>
        <authorList>
            <person name="Carninci P."/>
            <person name="Kasukawa T."/>
            <person name="Katayama S."/>
            <person name="Gough J."/>
            <person name="Frith M.C."/>
            <person name="Maeda N."/>
            <person name="Oyama R."/>
            <person name="Ravasi T."/>
            <person name="Lenhard B."/>
            <person name="Wells C."/>
            <person name="Kodzius R."/>
            <person name="Shimokawa K."/>
            <person name="Bajic V.B."/>
            <person name="Brenner S.E."/>
            <person name="Batalov S."/>
            <person name="Forrest A.R."/>
            <person name="Zavolan M."/>
            <person name="Davis M.J."/>
            <person name="Wilming L.G."/>
            <person name="Aidinis V."/>
            <person name="Allen J.E."/>
            <person name="Ambesi-Impiombato A."/>
            <person name="Apweiler R."/>
            <person name="Aturaliya R.N."/>
            <person name="Bailey T.L."/>
            <person name="Bansal M."/>
            <person name="Baxter L."/>
            <person name="Beisel K.W."/>
            <person name="Bersano T."/>
            <person name="Bono H."/>
            <person name="Chalk A.M."/>
            <person name="Chiu K.P."/>
            <person name="Choudhary V."/>
            <person name="Christoffels A."/>
            <person name="Clutterbuck D.R."/>
            <person name="Crowe M.L."/>
            <person name="Dalla E."/>
            <person name="Dalrymple B.P."/>
            <person name="de Bono B."/>
            <person name="Della Gatta G."/>
            <person name="di Bernardo D."/>
            <person name="Down T."/>
            <person name="Engstrom P."/>
            <person name="Fagiolini M."/>
            <person name="Faulkner G."/>
            <person name="Fletcher C.F."/>
            <person name="Fukushima T."/>
            <person name="Furuno M."/>
            <person name="Futaki S."/>
            <person name="Gariboldi M."/>
            <person name="Georgii-Hemming P."/>
            <person name="Gingeras T.R."/>
            <person name="Gojobori T."/>
            <person name="Green R.E."/>
            <person name="Gustincich S."/>
            <person name="Harbers M."/>
            <person name="Hayashi Y."/>
            <person name="Hensch T.K."/>
            <person name="Hirokawa N."/>
            <person name="Hill D."/>
            <person name="Huminiecki L."/>
            <person name="Iacono M."/>
            <person name="Ikeo K."/>
            <person name="Iwama A."/>
            <person name="Ishikawa T."/>
            <person name="Jakt M."/>
            <person name="Kanapin A."/>
            <person name="Katoh M."/>
            <person name="Kawasawa Y."/>
            <person name="Kelso J."/>
            <person name="Kitamura H."/>
            <person name="Kitano H."/>
            <person name="Kollias G."/>
            <person name="Krishnan S.P."/>
            <person name="Kruger A."/>
            <person name="Kummerfeld S.K."/>
            <person name="Kurochkin I.V."/>
            <person name="Lareau L.F."/>
            <person name="Lazarevic D."/>
            <person name="Lipovich L."/>
            <person name="Liu J."/>
            <person name="Liuni S."/>
            <person name="McWilliam S."/>
            <person name="Madan Babu M."/>
            <person name="Madera M."/>
            <person name="Marchionni L."/>
            <person name="Matsuda H."/>
            <person name="Matsuzawa S."/>
            <person name="Miki H."/>
            <person name="Mignone F."/>
            <person name="Miyake S."/>
            <person name="Morris K."/>
            <person name="Mottagui-Tabar S."/>
            <person name="Mulder N."/>
            <person name="Nakano N."/>
            <person name="Nakauchi H."/>
            <person name="Ng P."/>
            <person name="Nilsson R."/>
            <person name="Nishiguchi S."/>
            <person name="Nishikawa S."/>
            <person name="Nori F."/>
            <person name="Ohara O."/>
            <person name="Okazaki Y."/>
            <person name="Orlando V."/>
            <person name="Pang K.C."/>
            <person name="Pavan W.J."/>
            <person name="Pavesi G."/>
            <person name="Pesole G."/>
            <person name="Petrovsky N."/>
            <person name="Piazza S."/>
            <person name="Reed J."/>
            <person name="Reid J.F."/>
            <person name="Ring B.Z."/>
            <person name="Ringwald M."/>
            <person name="Rost B."/>
            <person name="Ruan Y."/>
            <person name="Salzberg S.L."/>
            <person name="Sandelin A."/>
            <person name="Schneider C."/>
            <person name="Schoenbach C."/>
            <person name="Sekiguchi K."/>
            <person name="Semple C.A."/>
            <person name="Seno S."/>
            <person name="Sessa L."/>
            <person name="Sheng Y."/>
            <person name="Shibata Y."/>
            <person name="Shimada H."/>
            <person name="Shimada K."/>
            <person name="Silva D."/>
            <person name="Sinclair B."/>
            <person name="Sperling S."/>
            <person name="Stupka E."/>
            <person name="Sugiura K."/>
            <person name="Sultana R."/>
            <person name="Takenaka Y."/>
            <person name="Taki K."/>
            <person name="Tammoja K."/>
            <person name="Tan S.L."/>
            <person name="Tang S."/>
            <person name="Taylor M.S."/>
            <person name="Tegner J."/>
            <person name="Teichmann S.A."/>
            <person name="Ueda H.R."/>
            <person name="van Nimwegen E."/>
            <person name="Verardo R."/>
            <person name="Wei C.L."/>
            <person name="Yagi K."/>
            <person name="Yamanishi H."/>
            <person name="Zabarovsky E."/>
            <person name="Zhu S."/>
            <person name="Zimmer A."/>
            <person name="Hide W."/>
            <person name="Bult C."/>
            <person name="Grimmond S.M."/>
            <person name="Teasdale R.D."/>
            <person name="Liu E.T."/>
            <person name="Brusic V."/>
            <person name="Quackenbush J."/>
            <person name="Wahlestedt C."/>
            <person name="Mattick J.S."/>
            <person name="Hume D.A."/>
            <person name="Kai C."/>
            <person name="Sasaki D."/>
            <person name="Tomaru Y."/>
            <person name="Fukuda S."/>
            <person name="Kanamori-Katayama M."/>
            <person name="Suzuki M."/>
            <person name="Aoki J."/>
            <person name="Arakawa T."/>
            <person name="Iida J."/>
            <person name="Imamura K."/>
            <person name="Itoh M."/>
            <person name="Kato T."/>
            <person name="Kawaji H."/>
            <person name="Kawagashira N."/>
            <person name="Kawashima T."/>
            <person name="Kojima M."/>
            <person name="Kondo S."/>
            <person name="Konno H."/>
            <person name="Nakano K."/>
            <person name="Ninomiya N."/>
            <person name="Nishio T."/>
            <person name="Okada M."/>
            <person name="Plessy C."/>
            <person name="Shibata K."/>
            <person name="Shiraki T."/>
            <person name="Suzuki S."/>
            <person name="Tagami M."/>
            <person name="Waki K."/>
            <person name="Watahiki A."/>
            <person name="Okamura-Oho Y."/>
            <person name="Suzuki H."/>
            <person name="Kawai J."/>
            <person name="Hayashizaki Y."/>
        </authorList>
    </citation>
    <scope>NUCLEOTIDE SEQUENCE [LARGE SCALE MRNA] (ISOFORMS 1 AND 2)</scope>
    <source>
        <strain>C57BL/6J</strain>
        <strain>NOD</strain>
        <tissue>Dendritic cell</tissue>
        <tissue>Small intestine</tissue>
        <tissue>Thymus</tissue>
    </source>
</reference>
<reference evidence="15" key="3">
    <citation type="journal article" date="1997" name="EMBO J.">
        <title>Mitogen-activated protein kinases activate the serine/threonine kinases Mnk1 and Mnk2.</title>
        <authorList>
            <person name="Waskiewicz A.J."/>
            <person name="Flynn A."/>
            <person name="Proud C.G."/>
            <person name="Cooper J.A."/>
        </authorList>
    </citation>
    <scope>NUCLEOTIDE SEQUENCE [MRNA] OF 20-459 (ISOFORM 1)</scope>
    <scope>FUNCTION</scope>
    <scope>INTERACTION WITH MAPK3 AND MAPK1</scope>
    <source>
        <tissue>Embryo</tissue>
    </source>
</reference>
<reference evidence="15" key="4">
    <citation type="journal article" date="2004" name="Genome Res.">
        <title>The status, quality, and expansion of the NIH full-length cDNA project: the Mammalian Gene Collection (MGC).</title>
        <authorList>
            <consortium name="The MGC Project Team"/>
        </authorList>
    </citation>
    <scope>NUCLEOTIDE SEQUENCE [LARGE SCALE MRNA] OF 31-459 (ISOFORM 1)</scope>
    <source>
        <strain>NMRI</strain>
        <tissue>Mammary gland</tissue>
    </source>
</reference>
<reference key="5">
    <citation type="journal article" date="2001" name="Mol. Cell. Biol.">
        <title>The mitogen-activated protein kinase signal-integrating kinase Mnk2 is a eukaryotic initiation factor 4E kinase with high levels of basal activity in mammalian cells.</title>
        <authorList>
            <person name="Scheper G.C."/>
            <person name="Morrice N.A."/>
            <person name="Kleijn M."/>
            <person name="Proud C.G."/>
        </authorList>
    </citation>
    <scope>FUNCTION AS EIF4E KINASE</scope>
    <scope>PHOSPHORYLATION AT SER-74; SER-431; SER-434; SER-446 AND THR-450</scope>
    <scope>PHOSPHORYLATION BY MAPK1/ERK2; MAPK11 AND MAPK14</scope>
    <scope>INTERACTION WITH EIF4G PROTEINS</scope>
</reference>
<reference key="6">
    <citation type="journal article" date="2005" name="J. Biol. Chem.">
        <title>Features of the catalytic domains and C termini of the MAPK signal-integrating kinases Mnk1 and Mnk2 determine their differing activities and regulatory properties.</title>
        <authorList>
            <person name="Parra J.L."/>
            <person name="Buxade M."/>
            <person name="Proud C.G."/>
        </authorList>
    </citation>
    <scope>INTERACTION WITH MAPK3/ERK1 AND MAPK1/ERK2</scope>
    <scope>MUTAGENESIS OF ASP-238; LEU-438; GLN-440; SER-446 AND SER-448</scope>
</reference>
<reference key="7">
    <citation type="journal article" date="2007" name="Genes Cells">
        <title>Loss of MNK function sensitizes fibroblasts to serum-withdrawal induced apoptosis.</title>
        <authorList>
            <person name="Chrestensen C.A."/>
            <person name="Eschenroeder A."/>
            <person name="Ross W.G."/>
            <person name="Ueda T."/>
            <person name="Watanabe-Fukunaga R."/>
            <person name="Fukunaga R."/>
            <person name="Sturgill T.W."/>
        </authorList>
    </citation>
    <scope>FUNCTION IN SERUM-WITHDRAWAL INDUCED APOPTOSIS</scope>
    <scope>ACTIVITY REGULATION</scope>
</reference>
<reference key="8">
    <citation type="journal article" date="2007" name="Int. J. Biochem. Cell Biol.">
        <title>Roles of mitogen-activated protein kinase signal-integrating kinases 1 and 2 in oxidant-mediated eIF4E phosphorylation.</title>
        <authorList>
            <person name="Shenberger J.S."/>
            <person name="Zhang L."/>
            <person name="Hughlock M.K."/>
            <person name="Ueda T."/>
            <person name="Watanabe-Fukunaga R."/>
            <person name="Fukunaga R."/>
        </authorList>
    </citation>
    <scope>FUNCTION AS EIF4E KINASE</scope>
</reference>
<reference key="9">
    <citation type="journal article" date="2010" name="Biol. Reprod.">
        <title>Differential contribution of the MTOR and MNK pathways to the regulation of mRNA translation in meiotic and postmeiotic mouse male germ cells.</title>
        <authorList>
            <person name="Messina V."/>
            <person name="Di Sauro A."/>
            <person name="Pedrotti S."/>
            <person name="Adesso L."/>
            <person name="Latina A."/>
            <person name="Geremia R."/>
            <person name="Rossi P."/>
            <person name="Sette C."/>
        </authorList>
    </citation>
    <scope>FUNCTION IN MRNA TRANSLATION REGULATION DURING SPERMATOGENESIS</scope>
</reference>
<reference key="10">
    <citation type="journal article" date="2010" name="Cell">
        <title>A tissue-specific atlas of mouse protein phosphorylation and expression.</title>
        <authorList>
            <person name="Huttlin E.L."/>
            <person name="Jedrychowski M.P."/>
            <person name="Elias J.E."/>
            <person name="Goswami T."/>
            <person name="Rad R."/>
            <person name="Beausoleil S.A."/>
            <person name="Villen J."/>
            <person name="Haas W."/>
            <person name="Sowa M.E."/>
            <person name="Gygi S.P."/>
        </authorList>
    </citation>
    <scope>PHOSPHORYLATION [LARGE SCALE ANALYSIS] AT SER-74</scope>
    <scope>IDENTIFICATION BY MASS SPECTROMETRY [LARGE SCALE ANALYSIS]</scope>
    <source>
        <tissue>Brown adipose tissue</tissue>
    </source>
</reference>
<reference key="11">
    <citation type="journal article" date="2010" name="Mol. Cell. Biol.">
        <title>Regulation of eukaryotic initiation factor 4E (eIF4E) phosphorylation by mitogen-activated protein kinase occurs through modulation of Mnk1-eIF4G interaction.</title>
        <authorList>
            <person name="Shveygert M."/>
            <person name="Kaiser C."/>
            <person name="Bradrick S.S."/>
            <person name="Gromeier M."/>
        </authorList>
    </citation>
    <scope>FUNCTION AS EIF4E KINASE</scope>
    <scope>INTERACTION WITH EIF4G1</scope>
</reference>
<reference key="12">
    <citation type="journal article" date="2010" name="Neoplasia">
        <title>Protein phosphatase 2A negatively regulates eukaryotic initiation factor 4E phosphorylation and eIF4F assembly through direct dephosphorylation of Mnk and eIF4E.</title>
        <authorList>
            <person name="Li Y."/>
            <person name="Yue P."/>
            <person name="Deng X."/>
            <person name="Ueda T."/>
            <person name="Fukunaga R."/>
            <person name="Khuri F.R."/>
            <person name="Sun S.-Y."/>
        </authorList>
    </citation>
    <scope>FUNCTION IN EIF4E PHOSPHORYLATION REGULATION</scope>
    <scope>DEPHOSPHORYLATION BY PP2A</scope>
    <scope>ACTIVITY REGULATION</scope>
</reference>
<dbReference type="EC" id="2.7.11.1"/>
<dbReference type="EMBL" id="AB164081">
    <property type="protein sequence ID" value="BAD18852.1"/>
    <property type="molecule type" value="mRNA"/>
</dbReference>
<dbReference type="EMBL" id="AK008277">
    <property type="protein sequence ID" value="BAB25570.2"/>
    <property type="status" value="ALT_FRAME"/>
    <property type="molecule type" value="mRNA"/>
</dbReference>
<dbReference type="EMBL" id="AK030830">
    <property type="protein sequence ID" value="BAC27151.2"/>
    <property type="molecule type" value="mRNA"/>
</dbReference>
<dbReference type="EMBL" id="AK154235">
    <property type="protein sequence ID" value="BAE32453.1"/>
    <property type="molecule type" value="mRNA"/>
</dbReference>
<dbReference type="EMBL" id="Y11092">
    <property type="protein sequence ID" value="CAA71966.1"/>
    <property type="status" value="ALT_FRAME"/>
    <property type="molecule type" value="mRNA"/>
</dbReference>
<dbReference type="EMBL" id="BC010256">
    <property type="protein sequence ID" value="AAH10256.1"/>
    <property type="status" value="ALT_INIT"/>
    <property type="molecule type" value="mRNA"/>
</dbReference>
<dbReference type="CCDS" id="CCDS24030.2">
    <molecule id="Q8CDB0-1"/>
</dbReference>
<dbReference type="RefSeq" id="NP_001415557.1">
    <molecule id="Q8CDB0-1"/>
    <property type="nucleotide sequence ID" value="NM_001428628.1"/>
</dbReference>
<dbReference type="RefSeq" id="NP_067437.2">
    <molecule id="Q8CDB0-1"/>
    <property type="nucleotide sequence ID" value="NM_021462.5"/>
</dbReference>
<dbReference type="RefSeq" id="XP_006513379.1">
    <property type="nucleotide sequence ID" value="XM_006513316.1"/>
</dbReference>
<dbReference type="RefSeq" id="XP_017169313.1">
    <property type="nucleotide sequence ID" value="XM_017313824.1"/>
</dbReference>
<dbReference type="SMR" id="Q8CDB0"/>
<dbReference type="BioGRID" id="201432">
    <property type="interactions" value="3"/>
</dbReference>
<dbReference type="FunCoup" id="Q8CDB0">
    <property type="interactions" value="3467"/>
</dbReference>
<dbReference type="IntAct" id="Q8CDB0">
    <property type="interactions" value="3"/>
</dbReference>
<dbReference type="MINT" id="Q8CDB0"/>
<dbReference type="STRING" id="10090.ENSMUSP00000143508"/>
<dbReference type="ChEMBL" id="CHEMBL4523384"/>
<dbReference type="iPTMnet" id="Q8CDB0"/>
<dbReference type="PhosphoSitePlus" id="Q8CDB0"/>
<dbReference type="jPOST" id="Q8CDB0"/>
<dbReference type="PaxDb" id="10090-ENSMUSP00000003433"/>
<dbReference type="ProteomicsDB" id="295954">
    <molecule id="Q8CDB0-1"/>
</dbReference>
<dbReference type="ProteomicsDB" id="295955">
    <molecule id="Q8CDB0-2"/>
</dbReference>
<dbReference type="Antibodypedia" id="10678">
    <property type="antibodies" value="295 antibodies from 30 providers"/>
</dbReference>
<dbReference type="DNASU" id="17347"/>
<dbReference type="Ensembl" id="ENSMUST00000200082.5">
    <molecule id="Q8CDB0-1"/>
    <property type="protein sequence ID" value="ENSMUSP00000143508.2"/>
    <property type="gene ID" value="ENSMUSG00000020190.14"/>
</dbReference>
<dbReference type="GeneID" id="17347"/>
<dbReference type="KEGG" id="mmu:17347"/>
<dbReference type="UCSC" id="uc007gef.3">
    <molecule id="Q8CDB0-1"/>
    <property type="organism name" value="mouse"/>
</dbReference>
<dbReference type="AGR" id="MGI:894279"/>
<dbReference type="CTD" id="2872"/>
<dbReference type="MGI" id="MGI:894279">
    <property type="gene designation" value="Mknk2"/>
</dbReference>
<dbReference type="VEuPathDB" id="HostDB:ENSMUSG00000020190"/>
<dbReference type="eggNOG" id="KOG0607">
    <property type="taxonomic scope" value="Eukaryota"/>
</dbReference>
<dbReference type="GeneTree" id="ENSGT00940000154587"/>
<dbReference type="InParanoid" id="Q8CDB0"/>
<dbReference type="OMA" id="NKMTEVT"/>
<dbReference type="OrthoDB" id="5794026at2759"/>
<dbReference type="PhylomeDB" id="Q8CDB0"/>
<dbReference type="TreeFam" id="TF314050"/>
<dbReference type="BioGRID-ORCS" id="17347">
    <property type="hits" value="1 hit in 79 CRISPR screens"/>
</dbReference>
<dbReference type="ChiTaRS" id="Mknk2">
    <property type="organism name" value="mouse"/>
</dbReference>
<dbReference type="PRO" id="PR:Q8CDB0"/>
<dbReference type="Proteomes" id="UP000000589">
    <property type="component" value="Chromosome 10"/>
</dbReference>
<dbReference type="RNAct" id="Q8CDB0">
    <property type="molecule type" value="protein"/>
</dbReference>
<dbReference type="Bgee" id="ENSMUSG00000020190">
    <property type="expression patterns" value="Expressed in peripheral lymph node and 267 other cell types or tissues"/>
</dbReference>
<dbReference type="ExpressionAtlas" id="Q8CDB0">
    <property type="expression patterns" value="baseline and differential"/>
</dbReference>
<dbReference type="GO" id="GO:0005737">
    <property type="term" value="C:cytoplasm"/>
    <property type="evidence" value="ECO:0007669"/>
    <property type="project" value="UniProtKB-SubCell"/>
</dbReference>
<dbReference type="GO" id="GO:0016605">
    <property type="term" value="C:PML body"/>
    <property type="evidence" value="ECO:0007669"/>
    <property type="project" value="UniProtKB-SubCell"/>
</dbReference>
<dbReference type="GO" id="GO:0005524">
    <property type="term" value="F:ATP binding"/>
    <property type="evidence" value="ECO:0000314"/>
    <property type="project" value="UniProtKB"/>
</dbReference>
<dbReference type="GO" id="GO:0046872">
    <property type="term" value="F:metal ion binding"/>
    <property type="evidence" value="ECO:0007669"/>
    <property type="project" value="UniProtKB-KW"/>
</dbReference>
<dbReference type="GO" id="GO:0106310">
    <property type="term" value="F:protein serine kinase activity"/>
    <property type="evidence" value="ECO:0007669"/>
    <property type="project" value="RHEA"/>
</dbReference>
<dbReference type="GO" id="GO:0004674">
    <property type="term" value="F:protein serine/threonine kinase activity"/>
    <property type="evidence" value="ECO:0000314"/>
    <property type="project" value="UniProtKB"/>
</dbReference>
<dbReference type="GO" id="GO:0071243">
    <property type="term" value="P:cellular response to arsenic-containing substance"/>
    <property type="evidence" value="ECO:0007669"/>
    <property type="project" value="Ensembl"/>
</dbReference>
<dbReference type="GO" id="GO:0097192">
    <property type="term" value="P:extrinsic apoptotic signaling pathway in absence of ligand"/>
    <property type="evidence" value="ECO:0000315"/>
    <property type="project" value="MGI"/>
</dbReference>
<dbReference type="GO" id="GO:0030097">
    <property type="term" value="P:hemopoiesis"/>
    <property type="evidence" value="ECO:0007669"/>
    <property type="project" value="Ensembl"/>
</dbReference>
<dbReference type="GO" id="GO:0035556">
    <property type="term" value="P:intracellular signal transduction"/>
    <property type="evidence" value="ECO:0000314"/>
    <property type="project" value="UniProtKB"/>
</dbReference>
<dbReference type="GO" id="GO:0006468">
    <property type="term" value="P:protein phosphorylation"/>
    <property type="evidence" value="ECO:0000314"/>
    <property type="project" value="UniProtKB"/>
</dbReference>
<dbReference type="GO" id="GO:0006417">
    <property type="term" value="P:regulation of translation"/>
    <property type="evidence" value="ECO:0007669"/>
    <property type="project" value="UniProtKB-KW"/>
</dbReference>
<dbReference type="FunFam" id="1.10.510.10:FF:000119">
    <property type="entry name" value="Putative map kinase-interacting serine/threonine-protein kinase 1"/>
    <property type="match status" value="1"/>
</dbReference>
<dbReference type="FunFam" id="3.30.200.20:FF:000093">
    <property type="entry name" value="Putative map kinase-interacting serine/threonine-protein kinase 1"/>
    <property type="match status" value="1"/>
</dbReference>
<dbReference type="Gene3D" id="3.30.200.20">
    <property type="entry name" value="Phosphorylase Kinase, domain 1"/>
    <property type="match status" value="1"/>
</dbReference>
<dbReference type="Gene3D" id="1.10.510.10">
    <property type="entry name" value="Transferase(Phosphotransferase) domain 1"/>
    <property type="match status" value="1"/>
</dbReference>
<dbReference type="InterPro" id="IPR050205">
    <property type="entry name" value="CDPK_Ser/Thr_kinases"/>
</dbReference>
<dbReference type="InterPro" id="IPR011009">
    <property type="entry name" value="Kinase-like_dom_sf"/>
</dbReference>
<dbReference type="InterPro" id="IPR000719">
    <property type="entry name" value="Prot_kinase_dom"/>
</dbReference>
<dbReference type="InterPro" id="IPR017441">
    <property type="entry name" value="Protein_kinase_ATP_BS"/>
</dbReference>
<dbReference type="InterPro" id="IPR008271">
    <property type="entry name" value="Ser/Thr_kinase_AS"/>
</dbReference>
<dbReference type="PANTHER" id="PTHR24349">
    <property type="entry name" value="SERINE/THREONINE-PROTEIN KINASE"/>
    <property type="match status" value="1"/>
</dbReference>
<dbReference type="Pfam" id="PF00069">
    <property type="entry name" value="Pkinase"/>
    <property type="match status" value="1"/>
</dbReference>
<dbReference type="SMART" id="SM00220">
    <property type="entry name" value="S_TKc"/>
    <property type="match status" value="1"/>
</dbReference>
<dbReference type="SUPFAM" id="SSF56112">
    <property type="entry name" value="Protein kinase-like (PK-like)"/>
    <property type="match status" value="1"/>
</dbReference>
<dbReference type="PROSITE" id="PS00107">
    <property type="entry name" value="PROTEIN_KINASE_ATP"/>
    <property type="match status" value="1"/>
</dbReference>
<dbReference type="PROSITE" id="PS50011">
    <property type="entry name" value="PROTEIN_KINASE_DOM"/>
    <property type="match status" value="1"/>
</dbReference>
<dbReference type="PROSITE" id="PS00108">
    <property type="entry name" value="PROTEIN_KINASE_ST"/>
    <property type="match status" value="1"/>
</dbReference>
<sequence>MVQKRTAELQGFHRSFKGQNPFELAFSLDLAQHRDSDFSPQCEARPDMPSSQPIDIPDAKKRGRKKKRCRATDSFSGRFEDVYQLQEDVLGEGAHARVQTCVNLITNQEYAVKIIEKQLGHIRSRVFREVEMLYQCQGHRNVLELIEFFEEEDRFYLVFEKMRGGSILSHIHRRRHFNELEASVVVQDVASALDFLHNKGIAHRDLKPENILCEHPNQVSPVKICDFDLGSGIKLNGDCSPISTPELLTPCGSAEYMAPEVVEAFSEEASIYDKRCDLWSLGVILYILLSGYPPFVGHCGSDCGWDRGEACPACQNMLFESIQEGKYEFPDKDWSHISFAAKDLISKLLVRDAKQRLSAAQVLQHPWVQGCAPENTLPTPLVLQRNSCAKDLTSFAAEAIAMNRQLAQCEEDAGQDQPVVIRATSRCLQLSPPSQSKLAQRRQRASLSATPVVLVGDRA</sequence>
<gene>
    <name type="primary">Mknk2</name>
    <name type="synonym">Mnk2</name>
</gene>
<name>MKNK2_MOUSE</name>
<evidence type="ECO:0000250" key="1"/>
<evidence type="ECO:0000250" key="2">
    <source>
        <dbReference type="UniProtKB" id="Q9HBH9"/>
    </source>
</evidence>
<evidence type="ECO:0000255" key="3">
    <source>
        <dbReference type="PROSITE-ProRule" id="PRU00159"/>
    </source>
</evidence>
<evidence type="ECO:0000255" key="4">
    <source>
        <dbReference type="PROSITE-ProRule" id="PRU10027"/>
    </source>
</evidence>
<evidence type="ECO:0000256" key="5">
    <source>
        <dbReference type="SAM" id="MobiDB-lite"/>
    </source>
</evidence>
<evidence type="ECO:0000269" key="6">
    <source>
    </source>
</evidence>
<evidence type="ECO:0000269" key="7">
    <source>
    </source>
</evidence>
<evidence type="ECO:0000269" key="8">
    <source>
    </source>
</evidence>
<evidence type="ECO:0000269" key="9">
    <source>
    </source>
</evidence>
<evidence type="ECO:0000269" key="10">
    <source>
    </source>
</evidence>
<evidence type="ECO:0000269" key="11">
    <source>
    </source>
</evidence>
<evidence type="ECO:0000269" key="12">
    <source>
    </source>
</evidence>
<evidence type="ECO:0000269" key="13">
    <source>
    </source>
</evidence>
<evidence type="ECO:0000303" key="14">
    <source>
    </source>
</evidence>
<evidence type="ECO:0000305" key="15"/>
<evidence type="ECO:0000312" key="16">
    <source>
        <dbReference type="EMBL" id="CAA71966.1"/>
    </source>
</evidence>
<evidence type="ECO:0007744" key="17">
    <source>
    </source>
</evidence>
<feature type="chain" id="PRO_0000086337" description="MAP kinase-interacting serine/threonine-protein kinase 2">
    <location>
        <begin position="1"/>
        <end position="459"/>
    </location>
</feature>
<feature type="domain" description="Protein kinase" evidence="3">
    <location>
        <begin position="84"/>
        <end position="368"/>
    </location>
</feature>
<feature type="region of interest" description="Disordered" evidence="5">
    <location>
        <begin position="37"/>
        <end position="67"/>
    </location>
</feature>
<feature type="short sequence motif" description="Nuclear localization signal" evidence="1">
    <location>
        <begin position="60"/>
        <end position="66"/>
    </location>
</feature>
<feature type="short sequence motif" description="MAP kinase binding">
    <location>
        <begin position="438"/>
        <end position="442"/>
    </location>
</feature>
<feature type="active site" description="Proton acceptor" evidence="3 4">
    <location>
        <position position="205"/>
    </location>
</feature>
<feature type="binding site" evidence="3">
    <location>
        <begin position="90"/>
        <end position="98"/>
    </location>
    <ligand>
        <name>ATP</name>
        <dbReference type="ChEBI" id="CHEBI:30616"/>
    </ligand>
</feature>
<feature type="binding site" evidence="3">
    <location>
        <position position="113"/>
    </location>
    <ligand>
        <name>ATP</name>
        <dbReference type="ChEBI" id="CHEBI:30616"/>
    </ligand>
</feature>
<feature type="binding site" evidence="1">
    <location>
        <begin position="160"/>
        <end position="162"/>
    </location>
    <ligand>
        <name>staurosporine</name>
        <dbReference type="ChEBI" id="CHEBI:57491"/>
    </ligand>
</feature>
<feature type="binding site" evidence="1">
    <location>
        <position position="209"/>
    </location>
    <ligand>
        <name>staurosporine</name>
        <dbReference type="ChEBI" id="CHEBI:57491"/>
    </ligand>
</feature>
<feature type="binding site" evidence="1">
    <location>
        <position position="299"/>
    </location>
    <ligand>
        <name>Zn(2+)</name>
        <dbReference type="ChEBI" id="CHEBI:29105"/>
    </ligand>
</feature>
<feature type="binding site" evidence="1">
    <location>
        <position position="311"/>
    </location>
    <ligand>
        <name>Zn(2+)</name>
        <dbReference type="ChEBI" id="CHEBI:29105"/>
    </ligand>
</feature>
<feature type="binding site" evidence="1">
    <location>
        <position position="314"/>
    </location>
    <ligand>
        <name>Zn(2+)</name>
        <dbReference type="ChEBI" id="CHEBI:29105"/>
    </ligand>
</feature>
<feature type="modified residue" description="Phosphoserine" evidence="6 17">
    <location>
        <position position="74"/>
    </location>
</feature>
<feature type="modified residue" description="Phosphothreonine" evidence="2">
    <location>
        <position position="244"/>
    </location>
</feature>
<feature type="modified residue" description="Phosphothreonine" evidence="2">
    <location>
        <position position="249"/>
    </location>
</feature>
<feature type="modified residue" description="Phosphothreonine" evidence="2">
    <location>
        <position position="379"/>
    </location>
</feature>
<feature type="modified residue" description="Phosphoserine" evidence="6">
    <location>
        <position position="431"/>
    </location>
</feature>
<feature type="modified residue" description="Phosphoserine" evidence="6">
    <location>
        <position position="434"/>
    </location>
</feature>
<feature type="modified residue" description="Phosphoserine" evidence="6">
    <location>
        <position position="446"/>
    </location>
</feature>
<feature type="modified residue" description="Phosphothreonine" evidence="6">
    <location>
        <position position="450"/>
    </location>
</feature>
<feature type="splice variant" id="VSP_007355" description="In isoform 2." evidence="14">
    <location>
        <begin position="48"/>
        <end position="256"/>
    </location>
</feature>
<feature type="mutagenesis site" description="Loss of activity." evidence="7">
    <original>D</original>
    <variation>A</variation>
    <location>
        <position position="238"/>
    </location>
</feature>
<feature type="mutagenesis site" description="Reduced phosphorylation." evidence="7">
    <original>L</original>
    <variation>A</variation>
    <location>
        <position position="438"/>
    </location>
</feature>
<feature type="mutagenesis site" description="Reduced MAPK3/ERK1 and MAPK1/ERK2-binding." evidence="7">
    <original>Q</original>
    <variation>R</variation>
    <location>
        <position position="440"/>
    </location>
</feature>
<feature type="mutagenesis site" description="Normal MAPK3/ERK1 and MAPK1/ERK2-binding." evidence="7">
    <original>S</original>
    <variation>A</variation>
    <variation>D</variation>
    <location>
        <position position="446"/>
    </location>
</feature>
<feature type="mutagenesis site" description="Normal MAPK3/ERK1 and MAPK1/ER2K-binding." evidence="7">
    <original>S</original>
    <variation>A</variation>
    <location>
        <position position="448"/>
    </location>
</feature>
<feature type="mutagenesis site" description="Reduced MAPK3/ERK1 and MAPK1/ER2K-binding." evidence="7">
    <original>S</original>
    <variation>D</variation>
    <location>
        <position position="448"/>
    </location>
</feature>
<feature type="sequence conflict" description="In Ref. 2; BAB25570." evidence="15" ref="2">
    <original>Y</original>
    <variation>D</variation>
    <location>
        <position position="256"/>
    </location>
</feature>
<feature type="sequence conflict" description="In Ref. 2; BAB25570." evidence="15" ref="2">
    <original>L</original>
    <variation>P</variation>
    <location>
        <position position="349"/>
    </location>
</feature>
<feature type="sequence conflict" description="In Ref. 2; BAB25570." evidence="15" ref="2">
    <original>L</original>
    <variation>I</variation>
    <location>
        <position position="454"/>
    </location>
</feature>
<accession>Q8CDB0</accession>
<accession>O08606</accession>
<accession>Q75PY0</accession>
<accession>Q9D893</accession>